<name>CRL_SALAR</name>
<evidence type="ECO:0000255" key="1">
    <source>
        <dbReference type="HAMAP-Rule" id="MF_01178"/>
    </source>
</evidence>
<dbReference type="EMBL" id="CP000880">
    <property type="protein sequence ID" value="ABX22549.1"/>
    <property type="molecule type" value="Genomic_DNA"/>
</dbReference>
<dbReference type="SMR" id="A9MNR7"/>
<dbReference type="STRING" id="41514.SARI_02693"/>
<dbReference type="KEGG" id="ses:SARI_02693"/>
<dbReference type="HOGENOM" id="CLU_136773_0_0_6"/>
<dbReference type="Proteomes" id="UP000002084">
    <property type="component" value="Chromosome"/>
</dbReference>
<dbReference type="GO" id="GO:0005737">
    <property type="term" value="C:cytoplasm"/>
    <property type="evidence" value="ECO:0007669"/>
    <property type="project" value="UniProtKB-SubCell"/>
</dbReference>
<dbReference type="GO" id="GO:0045893">
    <property type="term" value="P:positive regulation of DNA-templated transcription"/>
    <property type="evidence" value="ECO:0007669"/>
    <property type="project" value="UniProtKB-UniRule"/>
</dbReference>
<dbReference type="Gene3D" id="3.30.310.230">
    <property type="entry name" value="Sigma factor-binding protein Crl monomer"/>
    <property type="match status" value="1"/>
</dbReference>
<dbReference type="HAMAP" id="MF_01178">
    <property type="entry name" value="Crl"/>
    <property type="match status" value="1"/>
</dbReference>
<dbReference type="InterPro" id="IPR009986">
    <property type="entry name" value="Tscrpt_reg_Crl"/>
</dbReference>
<dbReference type="InterPro" id="IPR038208">
    <property type="entry name" value="Tscrpt_reg_Crl_sf"/>
</dbReference>
<dbReference type="NCBIfam" id="NF008217">
    <property type="entry name" value="PRK10984.1"/>
    <property type="match status" value="1"/>
</dbReference>
<dbReference type="Pfam" id="PF07417">
    <property type="entry name" value="Crl"/>
    <property type="match status" value="1"/>
</dbReference>
<sequence length="133" mass="15570">MTLPSGHPKSRLIKKFTALGPYIREGQCEDNRFFFDCLAVCVNVKPAPEKREFWGWWMELEAQEKSFTYRYQFGLFDKEGNWTAVPIKETEVVERLEYTLREFHGKLRDLLISMGLALEPSDDFNDEPVKLSA</sequence>
<keyword id="KW-0010">Activator</keyword>
<keyword id="KW-0963">Cytoplasm</keyword>
<keyword id="KW-1185">Reference proteome</keyword>
<keyword id="KW-0804">Transcription</keyword>
<keyword id="KW-0805">Transcription regulation</keyword>
<reference key="1">
    <citation type="submission" date="2007-11" db="EMBL/GenBank/DDBJ databases">
        <authorList>
            <consortium name="The Salmonella enterica serovar Arizonae Genome Sequencing Project"/>
            <person name="McClelland M."/>
            <person name="Sanderson E.K."/>
            <person name="Porwollik S."/>
            <person name="Spieth J."/>
            <person name="Clifton W.S."/>
            <person name="Fulton R."/>
            <person name="Chunyan W."/>
            <person name="Wollam A."/>
            <person name="Shah N."/>
            <person name="Pepin K."/>
            <person name="Bhonagiri V."/>
            <person name="Nash W."/>
            <person name="Johnson M."/>
            <person name="Thiruvilangam P."/>
            <person name="Wilson R."/>
        </authorList>
    </citation>
    <scope>NUCLEOTIDE SEQUENCE [LARGE SCALE GENOMIC DNA]</scope>
    <source>
        <strain>ATCC BAA-731 / CDC346-86 / RSK2980</strain>
    </source>
</reference>
<proteinExistence type="inferred from homology"/>
<organism>
    <name type="scientific">Salmonella arizonae (strain ATCC BAA-731 / CDC346-86 / RSK2980)</name>
    <dbReference type="NCBI Taxonomy" id="41514"/>
    <lineage>
        <taxon>Bacteria</taxon>
        <taxon>Pseudomonadati</taxon>
        <taxon>Pseudomonadota</taxon>
        <taxon>Gammaproteobacteria</taxon>
        <taxon>Enterobacterales</taxon>
        <taxon>Enterobacteriaceae</taxon>
        <taxon>Salmonella</taxon>
    </lineage>
</organism>
<feature type="chain" id="PRO_1000085443" description="Sigma factor-binding protein Crl">
    <location>
        <begin position="1"/>
        <end position="133"/>
    </location>
</feature>
<feature type="region of interest" description="Essential for activity" evidence="1">
    <location>
        <begin position="99"/>
        <end position="122"/>
    </location>
</feature>
<gene>
    <name evidence="1" type="primary">crl</name>
    <name type="ordered locus">SARI_02693</name>
</gene>
<comment type="function">
    <text evidence="1">Binds to the sigma-S subunit of RNA polymerase, activating expression of sigma-S-regulated genes. Stimulates RNA polymerase holoenzyme formation and may bind to several other sigma factors, such as sigma-70 and sigma-32.</text>
</comment>
<comment type="subcellular location">
    <subcellularLocation>
        <location evidence="1">Cytoplasm</location>
    </subcellularLocation>
</comment>
<comment type="similarity">
    <text evidence="1">Belongs to the Crl family.</text>
</comment>
<protein>
    <recommendedName>
        <fullName evidence="1">Sigma factor-binding protein Crl</fullName>
    </recommendedName>
</protein>
<accession>A9MNR7</accession>